<feature type="chain" id="PRO_0000320457" description="Mitochondrial thiamine pyrophosphate carrier 1">
    <location>
        <begin position="1"/>
        <end position="318"/>
    </location>
</feature>
<feature type="transmembrane region" description="Helical; Name=1" evidence="2">
    <location>
        <begin position="12"/>
        <end position="28"/>
    </location>
</feature>
<feature type="transmembrane region" description="Helical; Name=2" evidence="2">
    <location>
        <begin position="91"/>
        <end position="107"/>
    </location>
</feature>
<feature type="transmembrane region" description="Helical; Name=3" evidence="2">
    <location>
        <begin position="125"/>
        <end position="141"/>
    </location>
</feature>
<feature type="transmembrane region" description="Helical; Name=4" evidence="2">
    <location>
        <begin position="181"/>
        <end position="197"/>
    </location>
</feature>
<feature type="transmembrane region" description="Helical; Name=5" evidence="2">
    <location>
        <begin position="221"/>
        <end position="237"/>
    </location>
</feature>
<feature type="transmembrane region" description="Helical; Name=6" evidence="2">
    <location>
        <begin position="284"/>
        <end position="301"/>
    </location>
</feature>
<feature type="repeat" description="Solcar 1">
    <location>
        <begin position="12"/>
        <end position="110"/>
    </location>
</feature>
<feature type="repeat" description="Solcar 2">
    <location>
        <begin position="120"/>
        <end position="206"/>
    </location>
</feature>
<feature type="repeat" description="Solcar 3">
    <location>
        <begin position="214"/>
        <end position="309"/>
    </location>
</feature>
<protein>
    <recommendedName>
        <fullName>Mitochondrial thiamine pyrophosphate carrier 1</fullName>
    </recommendedName>
</protein>
<proteinExistence type="inferred from homology"/>
<comment type="function">
    <text evidence="1">Mitochondrial transporter that mediates uptake of thiamine pyrophosphate (ThPP) into mitochondria.</text>
</comment>
<comment type="subcellular location">
    <subcellularLocation>
        <location evidence="1">Mitochondrion inner membrane</location>
        <topology evidence="1">Multi-pass membrane protein</topology>
    </subcellularLocation>
</comment>
<comment type="similarity">
    <text evidence="3">Belongs to the mitochondrial carrier (TC 2.A.29) family.</text>
</comment>
<dbReference type="EMBL" id="BA000052">
    <property type="protein sequence ID" value="BAE60597.1"/>
    <property type="molecule type" value="Genomic_DNA"/>
</dbReference>
<dbReference type="RefSeq" id="XP_001727436.1">
    <property type="nucleotide sequence ID" value="XM_001727384.2"/>
</dbReference>
<dbReference type="SMR" id="Q2UCW8"/>
<dbReference type="STRING" id="510516.Q2UCW8"/>
<dbReference type="EnsemblFungi" id="BAE60597">
    <property type="protein sequence ID" value="BAE60597"/>
    <property type="gene ID" value="AO090012000416"/>
</dbReference>
<dbReference type="GeneID" id="5987910"/>
<dbReference type="KEGG" id="aor:AO090012000416"/>
<dbReference type="VEuPathDB" id="FungiDB:AO090012000416"/>
<dbReference type="HOGENOM" id="CLU_015166_10_3_1"/>
<dbReference type="OMA" id="MYVCYGA"/>
<dbReference type="OrthoDB" id="85438at5052"/>
<dbReference type="Proteomes" id="UP000006564">
    <property type="component" value="Chromosome 4"/>
</dbReference>
<dbReference type="GO" id="GO:0005743">
    <property type="term" value="C:mitochondrial inner membrane"/>
    <property type="evidence" value="ECO:0007669"/>
    <property type="project" value="UniProtKB-SubCell"/>
</dbReference>
<dbReference type="GO" id="GO:0055085">
    <property type="term" value="P:transmembrane transport"/>
    <property type="evidence" value="ECO:0007669"/>
    <property type="project" value="InterPro"/>
</dbReference>
<dbReference type="FunFam" id="1.50.40.10:FF:000011">
    <property type="entry name" value="Mitochondrial thiamine pyrophosphate carrier 1"/>
    <property type="match status" value="1"/>
</dbReference>
<dbReference type="Gene3D" id="1.50.40.10">
    <property type="entry name" value="Mitochondrial carrier domain"/>
    <property type="match status" value="1"/>
</dbReference>
<dbReference type="InterPro" id="IPR002067">
    <property type="entry name" value="Mit_carrier"/>
</dbReference>
<dbReference type="InterPro" id="IPR018108">
    <property type="entry name" value="Mitochondrial_sb/sol_carrier"/>
</dbReference>
<dbReference type="InterPro" id="IPR023395">
    <property type="entry name" value="Mt_carrier_dom_sf"/>
</dbReference>
<dbReference type="PANTHER" id="PTHR24089">
    <property type="entry name" value="SOLUTE CARRIER FAMILY 25"/>
    <property type="match status" value="1"/>
</dbReference>
<dbReference type="Pfam" id="PF00153">
    <property type="entry name" value="Mito_carr"/>
    <property type="match status" value="3"/>
</dbReference>
<dbReference type="PRINTS" id="PR00926">
    <property type="entry name" value="MITOCARRIER"/>
</dbReference>
<dbReference type="SUPFAM" id="SSF103506">
    <property type="entry name" value="Mitochondrial carrier"/>
    <property type="match status" value="1"/>
</dbReference>
<dbReference type="PROSITE" id="PS50920">
    <property type="entry name" value="SOLCAR"/>
    <property type="match status" value="3"/>
</dbReference>
<reference key="1">
    <citation type="journal article" date="2005" name="Nature">
        <title>Genome sequencing and analysis of Aspergillus oryzae.</title>
        <authorList>
            <person name="Machida M."/>
            <person name="Asai K."/>
            <person name="Sano M."/>
            <person name="Tanaka T."/>
            <person name="Kumagai T."/>
            <person name="Terai G."/>
            <person name="Kusumoto K."/>
            <person name="Arima T."/>
            <person name="Akita O."/>
            <person name="Kashiwagi Y."/>
            <person name="Abe K."/>
            <person name="Gomi K."/>
            <person name="Horiuchi H."/>
            <person name="Kitamoto K."/>
            <person name="Kobayashi T."/>
            <person name="Takeuchi M."/>
            <person name="Denning D.W."/>
            <person name="Galagan J.E."/>
            <person name="Nierman W.C."/>
            <person name="Yu J."/>
            <person name="Archer D.B."/>
            <person name="Bennett J.W."/>
            <person name="Bhatnagar D."/>
            <person name="Cleveland T.E."/>
            <person name="Fedorova N.D."/>
            <person name="Gotoh O."/>
            <person name="Horikawa H."/>
            <person name="Hosoyama A."/>
            <person name="Ichinomiya M."/>
            <person name="Igarashi R."/>
            <person name="Iwashita K."/>
            <person name="Juvvadi P.R."/>
            <person name="Kato M."/>
            <person name="Kato Y."/>
            <person name="Kin T."/>
            <person name="Kokubun A."/>
            <person name="Maeda H."/>
            <person name="Maeyama N."/>
            <person name="Maruyama J."/>
            <person name="Nagasaki H."/>
            <person name="Nakajima T."/>
            <person name="Oda K."/>
            <person name="Okada K."/>
            <person name="Paulsen I."/>
            <person name="Sakamoto K."/>
            <person name="Sawano T."/>
            <person name="Takahashi M."/>
            <person name="Takase K."/>
            <person name="Terabayashi Y."/>
            <person name="Wortman J.R."/>
            <person name="Yamada O."/>
            <person name="Yamagata Y."/>
            <person name="Anazawa H."/>
            <person name="Hata Y."/>
            <person name="Koide Y."/>
            <person name="Komori T."/>
            <person name="Koyama Y."/>
            <person name="Minetoki T."/>
            <person name="Suharnan S."/>
            <person name="Tanaka A."/>
            <person name="Isono K."/>
            <person name="Kuhara S."/>
            <person name="Ogasawara N."/>
            <person name="Kikuchi H."/>
        </authorList>
    </citation>
    <scope>NUCLEOTIDE SEQUENCE [LARGE SCALE GENOMIC DNA]</scope>
    <source>
        <strain>ATCC 42149 / RIB 40</strain>
    </source>
</reference>
<accession>Q2UCW8</accession>
<name>TPC1_ASPOR</name>
<evidence type="ECO:0000250" key="1"/>
<evidence type="ECO:0000255" key="2"/>
<evidence type="ECO:0000305" key="3"/>
<keyword id="KW-0472">Membrane</keyword>
<keyword id="KW-0496">Mitochondrion</keyword>
<keyword id="KW-0999">Mitochondrion inner membrane</keyword>
<keyword id="KW-1185">Reference proteome</keyword>
<keyword id="KW-0677">Repeat</keyword>
<keyword id="KW-0812">Transmembrane</keyword>
<keyword id="KW-1133">Transmembrane helix</keyword>
<keyword id="KW-0813">Transport</keyword>
<organism>
    <name type="scientific">Aspergillus oryzae (strain ATCC 42149 / RIB 40)</name>
    <name type="common">Yellow koji mold</name>
    <dbReference type="NCBI Taxonomy" id="510516"/>
    <lineage>
        <taxon>Eukaryota</taxon>
        <taxon>Fungi</taxon>
        <taxon>Dikarya</taxon>
        <taxon>Ascomycota</taxon>
        <taxon>Pezizomycotina</taxon>
        <taxon>Eurotiomycetes</taxon>
        <taxon>Eurotiomycetidae</taxon>
        <taxon>Eurotiales</taxon>
        <taxon>Aspergillaceae</taxon>
        <taxon>Aspergillus</taxon>
        <taxon>Aspergillus subgen. Circumdati</taxon>
    </lineage>
</organism>
<sequence length="318" mass="34540">MSAGGEHLKDEGTRRQVVLAGGIAGLVSRFCVAPLDVVKIRLQLQIHSLSDPTSHQNIKGPVYKGTLPTIRSIVREEGITGLWKGNIPAELMYVCYGAIQFAAYRTTTQALSQLDPYRLPPPAESFVAGATAGGLATASTYPLDLLRTRFAAQGTERVYTSLYASVRDIAQNEGPKGFFRGCSAAVGQIVPYMGLFFATYESLRPVMSGLHDLPFGSGDAAAGVVASVLAKTGVFPLDLVRKRLQVQGPTRSKYVHRNIPEYQGVYNTMAMIVRTQGMRGLYRGLTVSLFKAAPASAVTMWTYEKSLHYLRELEVASE</sequence>
<gene>
    <name type="primary">tpc1</name>
    <name type="ORF">AO090012000416</name>
</gene>